<name>RS9_PROM0</name>
<gene>
    <name evidence="1" type="primary">rpsI</name>
    <name evidence="1" type="synonym">rps9</name>
    <name type="ordered locus">P9301_17231</name>
</gene>
<sequence length="136" mass="15120">MNSQIKNKAVYWGTGRRKTSVARVRLIPGNGLIKINGRAGDDYLNFNPLHLNSIKAPLQTLGLENSYDMYVNVFGGGLTGQADAIKQGAARALCELSPDNRKPLKTEGHLSRDPRAKERRKYGLKKARKAPQFSKR</sequence>
<comment type="similarity">
    <text evidence="1">Belongs to the universal ribosomal protein uS9 family.</text>
</comment>
<organism>
    <name type="scientific">Prochlorococcus marinus (strain MIT 9301)</name>
    <dbReference type="NCBI Taxonomy" id="167546"/>
    <lineage>
        <taxon>Bacteria</taxon>
        <taxon>Bacillati</taxon>
        <taxon>Cyanobacteriota</taxon>
        <taxon>Cyanophyceae</taxon>
        <taxon>Synechococcales</taxon>
        <taxon>Prochlorococcaceae</taxon>
        <taxon>Prochlorococcus</taxon>
    </lineage>
</organism>
<dbReference type="EMBL" id="CP000576">
    <property type="protein sequence ID" value="ABO18346.1"/>
    <property type="molecule type" value="Genomic_DNA"/>
</dbReference>
<dbReference type="SMR" id="A3PF21"/>
<dbReference type="STRING" id="167546.P9301_17231"/>
<dbReference type="KEGG" id="pmg:P9301_17231"/>
<dbReference type="eggNOG" id="COG0103">
    <property type="taxonomic scope" value="Bacteria"/>
</dbReference>
<dbReference type="HOGENOM" id="CLU_046483_2_1_3"/>
<dbReference type="OrthoDB" id="9803965at2"/>
<dbReference type="Proteomes" id="UP000001430">
    <property type="component" value="Chromosome"/>
</dbReference>
<dbReference type="GO" id="GO:0022627">
    <property type="term" value="C:cytosolic small ribosomal subunit"/>
    <property type="evidence" value="ECO:0007669"/>
    <property type="project" value="TreeGrafter"/>
</dbReference>
<dbReference type="GO" id="GO:0003723">
    <property type="term" value="F:RNA binding"/>
    <property type="evidence" value="ECO:0007669"/>
    <property type="project" value="TreeGrafter"/>
</dbReference>
<dbReference type="GO" id="GO:0003735">
    <property type="term" value="F:structural constituent of ribosome"/>
    <property type="evidence" value="ECO:0007669"/>
    <property type="project" value="InterPro"/>
</dbReference>
<dbReference type="GO" id="GO:0006412">
    <property type="term" value="P:translation"/>
    <property type="evidence" value="ECO:0007669"/>
    <property type="project" value="UniProtKB-UniRule"/>
</dbReference>
<dbReference type="FunFam" id="3.30.230.10:FF:000001">
    <property type="entry name" value="30S ribosomal protein S9"/>
    <property type="match status" value="1"/>
</dbReference>
<dbReference type="Gene3D" id="3.30.230.10">
    <property type="match status" value="1"/>
</dbReference>
<dbReference type="HAMAP" id="MF_00532_B">
    <property type="entry name" value="Ribosomal_uS9_B"/>
    <property type="match status" value="1"/>
</dbReference>
<dbReference type="InterPro" id="IPR020568">
    <property type="entry name" value="Ribosomal_Su5_D2-typ_SF"/>
</dbReference>
<dbReference type="InterPro" id="IPR000754">
    <property type="entry name" value="Ribosomal_uS9"/>
</dbReference>
<dbReference type="InterPro" id="IPR023035">
    <property type="entry name" value="Ribosomal_uS9_bac/plastid"/>
</dbReference>
<dbReference type="InterPro" id="IPR020574">
    <property type="entry name" value="Ribosomal_uS9_CS"/>
</dbReference>
<dbReference type="InterPro" id="IPR014721">
    <property type="entry name" value="Ribsml_uS5_D2-typ_fold_subgr"/>
</dbReference>
<dbReference type="NCBIfam" id="NF001099">
    <property type="entry name" value="PRK00132.1"/>
    <property type="match status" value="1"/>
</dbReference>
<dbReference type="PANTHER" id="PTHR21569">
    <property type="entry name" value="RIBOSOMAL PROTEIN S9"/>
    <property type="match status" value="1"/>
</dbReference>
<dbReference type="PANTHER" id="PTHR21569:SF1">
    <property type="entry name" value="SMALL RIBOSOMAL SUBUNIT PROTEIN US9M"/>
    <property type="match status" value="1"/>
</dbReference>
<dbReference type="Pfam" id="PF00380">
    <property type="entry name" value="Ribosomal_S9"/>
    <property type="match status" value="1"/>
</dbReference>
<dbReference type="SUPFAM" id="SSF54211">
    <property type="entry name" value="Ribosomal protein S5 domain 2-like"/>
    <property type="match status" value="1"/>
</dbReference>
<dbReference type="PROSITE" id="PS00360">
    <property type="entry name" value="RIBOSOMAL_S9"/>
    <property type="match status" value="1"/>
</dbReference>
<reference key="1">
    <citation type="journal article" date="2007" name="PLoS Genet.">
        <title>Patterns and implications of gene gain and loss in the evolution of Prochlorococcus.</title>
        <authorList>
            <person name="Kettler G.C."/>
            <person name="Martiny A.C."/>
            <person name="Huang K."/>
            <person name="Zucker J."/>
            <person name="Coleman M.L."/>
            <person name="Rodrigue S."/>
            <person name="Chen F."/>
            <person name="Lapidus A."/>
            <person name="Ferriera S."/>
            <person name="Johnson J."/>
            <person name="Steglich C."/>
            <person name="Church G.M."/>
            <person name="Richardson P."/>
            <person name="Chisholm S.W."/>
        </authorList>
    </citation>
    <scope>NUCLEOTIDE SEQUENCE [LARGE SCALE GENOMIC DNA]</scope>
    <source>
        <strain>MIT 9301</strain>
    </source>
</reference>
<keyword id="KW-1185">Reference proteome</keyword>
<keyword id="KW-0687">Ribonucleoprotein</keyword>
<keyword id="KW-0689">Ribosomal protein</keyword>
<evidence type="ECO:0000255" key="1">
    <source>
        <dbReference type="HAMAP-Rule" id="MF_00532"/>
    </source>
</evidence>
<evidence type="ECO:0000256" key="2">
    <source>
        <dbReference type="SAM" id="MobiDB-lite"/>
    </source>
</evidence>
<evidence type="ECO:0000305" key="3"/>
<protein>
    <recommendedName>
        <fullName evidence="1">Small ribosomal subunit protein uS9</fullName>
    </recommendedName>
    <alternativeName>
        <fullName evidence="3">30S ribosomal protein S9</fullName>
    </alternativeName>
</protein>
<accession>A3PF21</accession>
<proteinExistence type="inferred from homology"/>
<feature type="chain" id="PRO_1000051284" description="Small ribosomal subunit protein uS9">
    <location>
        <begin position="1"/>
        <end position="136"/>
    </location>
</feature>
<feature type="region of interest" description="Disordered" evidence="2">
    <location>
        <begin position="97"/>
        <end position="136"/>
    </location>
</feature>
<feature type="compositionally biased region" description="Basic and acidic residues" evidence="2">
    <location>
        <begin position="98"/>
        <end position="116"/>
    </location>
</feature>
<feature type="compositionally biased region" description="Basic residues" evidence="2">
    <location>
        <begin position="117"/>
        <end position="136"/>
    </location>
</feature>